<organism>
    <name type="scientific">Talaromyces stipitatus (strain ATCC 10500 / CBS 375.48 / QM 6759 / NRRL 1006)</name>
    <name type="common">Penicillium stipitatum</name>
    <dbReference type="NCBI Taxonomy" id="441959"/>
    <lineage>
        <taxon>Eukaryota</taxon>
        <taxon>Fungi</taxon>
        <taxon>Dikarya</taxon>
        <taxon>Ascomycota</taxon>
        <taxon>Pezizomycotina</taxon>
        <taxon>Eurotiomycetes</taxon>
        <taxon>Eurotiomycetidae</taxon>
        <taxon>Eurotiales</taxon>
        <taxon>Trichocomaceae</taxon>
        <taxon>Talaromyces</taxon>
        <taxon>Talaromyces sect. Talaromyces</taxon>
    </lineage>
</organism>
<dbReference type="EC" id="3.4.11.18" evidence="1"/>
<dbReference type="EMBL" id="EQ962652">
    <property type="protein sequence ID" value="EED23745.1"/>
    <property type="molecule type" value="Genomic_DNA"/>
</dbReference>
<dbReference type="RefSeq" id="XP_002341132.1">
    <property type="nucleotide sequence ID" value="XM_002341091.1"/>
</dbReference>
<dbReference type="SMR" id="B8LUH2"/>
<dbReference type="FunCoup" id="B8LUH2">
    <property type="interactions" value="1183"/>
</dbReference>
<dbReference type="STRING" id="441959.B8LUH2"/>
<dbReference type="GeneID" id="8102525"/>
<dbReference type="VEuPathDB" id="FungiDB:TSTA_071420"/>
<dbReference type="eggNOG" id="KOG2775">
    <property type="taxonomic scope" value="Eukaryota"/>
</dbReference>
<dbReference type="HOGENOM" id="CLU_015857_7_1_1"/>
<dbReference type="InParanoid" id="B8LUH2"/>
<dbReference type="OMA" id="PFAKRWL"/>
<dbReference type="OrthoDB" id="7848262at2759"/>
<dbReference type="PhylomeDB" id="B8LUH2"/>
<dbReference type="Proteomes" id="UP000001745">
    <property type="component" value="Unassembled WGS sequence"/>
</dbReference>
<dbReference type="GO" id="GO:0005737">
    <property type="term" value="C:cytoplasm"/>
    <property type="evidence" value="ECO:0007669"/>
    <property type="project" value="UniProtKB-SubCell"/>
</dbReference>
<dbReference type="GO" id="GO:0004239">
    <property type="term" value="F:initiator methionyl aminopeptidase activity"/>
    <property type="evidence" value="ECO:0007669"/>
    <property type="project" value="UniProtKB-UniRule"/>
</dbReference>
<dbReference type="GO" id="GO:0046872">
    <property type="term" value="F:metal ion binding"/>
    <property type="evidence" value="ECO:0007669"/>
    <property type="project" value="UniProtKB-UniRule"/>
</dbReference>
<dbReference type="GO" id="GO:0070006">
    <property type="term" value="F:metalloaminopeptidase activity"/>
    <property type="evidence" value="ECO:0007669"/>
    <property type="project" value="UniProtKB-UniRule"/>
</dbReference>
<dbReference type="GO" id="GO:0006508">
    <property type="term" value="P:proteolysis"/>
    <property type="evidence" value="ECO:0007669"/>
    <property type="project" value="UniProtKB-KW"/>
</dbReference>
<dbReference type="CDD" id="cd01088">
    <property type="entry name" value="MetAP2"/>
    <property type="match status" value="1"/>
</dbReference>
<dbReference type="FunFam" id="1.10.10.10:FF:000370">
    <property type="entry name" value="Methionine aminopeptidase 2"/>
    <property type="match status" value="1"/>
</dbReference>
<dbReference type="Gene3D" id="3.90.230.10">
    <property type="entry name" value="Creatinase/methionine aminopeptidase superfamily"/>
    <property type="match status" value="1"/>
</dbReference>
<dbReference type="Gene3D" id="1.10.10.10">
    <property type="entry name" value="Winged helix-like DNA-binding domain superfamily/Winged helix DNA-binding domain"/>
    <property type="match status" value="1"/>
</dbReference>
<dbReference type="HAMAP" id="MF_03175">
    <property type="entry name" value="MetAP_2_euk"/>
    <property type="match status" value="1"/>
</dbReference>
<dbReference type="InterPro" id="IPR036005">
    <property type="entry name" value="Creatinase/aminopeptidase-like"/>
</dbReference>
<dbReference type="InterPro" id="IPR050247">
    <property type="entry name" value="Met_Aminopeptidase_Type2"/>
</dbReference>
<dbReference type="InterPro" id="IPR000994">
    <property type="entry name" value="Pept_M24"/>
</dbReference>
<dbReference type="InterPro" id="IPR001714">
    <property type="entry name" value="Pept_M24_MAP"/>
</dbReference>
<dbReference type="InterPro" id="IPR002468">
    <property type="entry name" value="Pept_M24A_MAP2"/>
</dbReference>
<dbReference type="InterPro" id="IPR018349">
    <property type="entry name" value="Pept_M24A_MAP2_BS"/>
</dbReference>
<dbReference type="InterPro" id="IPR036388">
    <property type="entry name" value="WH-like_DNA-bd_sf"/>
</dbReference>
<dbReference type="InterPro" id="IPR036390">
    <property type="entry name" value="WH_DNA-bd_sf"/>
</dbReference>
<dbReference type="NCBIfam" id="TIGR00501">
    <property type="entry name" value="met_pdase_II"/>
    <property type="match status" value="1"/>
</dbReference>
<dbReference type="PANTHER" id="PTHR45777">
    <property type="entry name" value="METHIONINE AMINOPEPTIDASE 2"/>
    <property type="match status" value="1"/>
</dbReference>
<dbReference type="PANTHER" id="PTHR45777:SF2">
    <property type="entry name" value="METHIONINE AMINOPEPTIDASE 2"/>
    <property type="match status" value="1"/>
</dbReference>
<dbReference type="Pfam" id="PF00557">
    <property type="entry name" value="Peptidase_M24"/>
    <property type="match status" value="1"/>
</dbReference>
<dbReference type="PRINTS" id="PR00599">
    <property type="entry name" value="MAPEPTIDASE"/>
</dbReference>
<dbReference type="SUPFAM" id="SSF55920">
    <property type="entry name" value="Creatinase/aminopeptidase"/>
    <property type="match status" value="1"/>
</dbReference>
<dbReference type="SUPFAM" id="SSF46785">
    <property type="entry name" value="Winged helix' DNA-binding domain"/>
    <property type="match status" value="1"/>
</dbReference>
<dbReference type="PROSITE" id="PS01202">
    <property type="entry name" value="MAP_2"/>
    <property type="match status" value="1"/>
</dbReference>
<proteinExistence type="inferred from homology"/>
<reference key="1">
    <citation type="journal article" date="2015" name="Genome Announc.">
        <title>Genome sequence of the AIDS-associated pathogen Penicillium marneffei (ATCC18224) and its near taxonomic relative Talaromyces stipitatus (ATCC10500).</title>
        <authorList>
            <person name="Nierman W.C."/>
            <person name="Fedorova-Abrams N.D."/>
            <person name="Andrianopoulos A."/>
        </authorList>
    </citation>
    <scope>NUCLEOTIDE SEQUENCE [LARGE SCALE GENOMIC DNA]</scope>
    <source>
        <strain>ATCC 10500 / CBS 375.48 / QM 6759 / NRRL 1006</strain>
    </source>
</reference>
<name>MAP21_TALSN</name>
<accession>B8LUH2</accession>
<comment type="function">
    <text evidence="1">Cotranslationally removes the N-terminal methionine from nascent proteins. The N-terminal methionine is often cleaved when the second residue in the primary sequence is small and uncharged (Met-Ala-, Cys, Gly, Pro, Ser, Thr, or Val).</text>
</comment>
<comment type="catalytic activity">
    <reaction evidence="1">
        <text>Release of N-terminal amino acids, preferentially methionine, from peptides and arylamides.</text>
        <dbReference type="EC" id="3.4.11.18"/>
    </reaction>
</comment>
<comment type="cofactor">
    <cofactor evidence="1">
        <name>Co(2+)</name>
        <dbReference type="ChEBI" id="CHEBI:48828"/>
    </cofactor>
    <cofactor evidence="1">
        <name>Zn(2+)</name>
        <dbReference type="ChEBI" id="CHEBI:29105"/>
    </cofactor>
    <cofactor evidence="1">
        <name>Mn(2+)</name>
        <dbReference type="ChEBI" id="CHEBI:29035"/>
    </cofactor>
    <cofactor evidence="1">
        <name>Fe(2+)</name>
        <dbReference type="ChEBI" id="CHEBI:29033"/>
    </cofactor>
    <text evidence="1">Binds 2 divalent metal cations per subunit. Has a high-affinity and a low affinity metal-binding site. The true nature of the physiological cofactor is under debate. The enzyme is active with cobalt, zinc, manganese or divalent iron ions. Most likely, methionine aminopeptidases function as mononuclear Fe(2+)-metalloproteases under physiological conditions, and the catalytically relevant metal-binding site has been assigned to the histidine-containing high-affinity site.</text>
</comment>
<comment type="subcellular location">
    <subcellularLocation>
        <location evidence="1">Cytoplasm</location>
    </subcellularLocation>
</comment>
<comment type="similarity">
    <text evidence="1">Belongs to the peptidase M24A family. Methionine aminopeptidase eukaryotic type 2 subfamily.</text>
</comment>
<evidence type="ECO:0000255" key="1">
    <source>
        <dbReference type="HAMAP-Rule" id="MF_03175"/>
    </source>
</evidence>
<evidence type="ECO:0000256" key="2">
    <source>
        <dbReference type="SAM" id="MobiDB-lite"/>
    </source>
</evidence>
<gene>
    <name type="ORF">TSTA_071420</name>
</gene>
<feature type="chain" id="PRO_0000407614" description="Methionine aminopeptidase 2-1">
    <location>
        <begin position="1"/>
        <end position="443"/>
    </location>
</feature>
<feature type="region of interest" description="Disordered" evidence="2">
    <location>
        <begin position="1"/>
        <end position="90"/>
    </location>
</feature>
<feature type="compositionally biased region" description="Acidic residues" evidence="2">
    <location>
        <begin position="33"/>
        <end position="48"/>
    </location>
</feature>
<feature type="compositionally biased region" description="Basic residues" evidence="2">
    <location>
        <begin position="58"/>
        <end position="73"/>
    </location>
</feature>
<feature type="binding site" evidence="1">
    <location>
        <position position="196"/>
    </location>
    <ligand>
        <name>substrate</name>
    </ligand>
</feature>
<feature type="binding site" evidence="1">
    <location>
        <position position="216"/>
    </location>
    <ligand>
        <name>a divalent metal cation</name>
        <dbReference type="ChEBI" id="CHEBI:60240"/>
        <label>1</label>
    </ligand>
</feature>
<feature type="binding site" evidence="1">
    <location>
        <position position="227"/>
    </location>
    <ligand>
        <name>a divalent metal cation</name>
        <dbReference type="ChEBI" id="CHEBI:60240"/>
        <label>1</label>
    </ligand>
</feature>
<feature type="binding site" evidence="1">
    <location>
        <position position="227"/>
    </location>
    <ligand>
        <name>a divalent metal cation</name>
        <dbReference type="ChEBI" id="CHEBI:60240"/>
        <label>2</label>
        <note>catalytic</note>
    </ligand>
</feature>
<feature type="binding site" evidence="1">
    <location>
        <position position="296"/>
    </location>
    <ligand>
        <name>a divalent metal cation</name>
        <dbReference type="ChEBI" id="CHEBI:60240"/>
        <label>2</label>
        <note>catalytic</note>
    </ligand>
</feature>
<feature type="binding site" evidence="1">
    <location>
        <position position="304"/>
    </location>
    <ligand>
        <name>substrate</name>
    </ligand>
</feature>
<feature type="binding site" evidence="1">
    <location>
        <position position="329"/>
    </location>
    <ligand>
        <name>a divalent metal cation</name>
        <dbReference type="ChEBI" id="CHEBI:60240"/>
        <label>2</label>
        <note>catalytic</note>
    </ligand>
</feature>
<feature type="binding site" evidence="1">
    <location>
        <position position="424"/>
    </location>
    <ligand>
        <name>a divalent metal cation</name>
        <dbReference type="ChEBI" id="CHEBI:60240"/>
        <label>1</label>
    </ligand>
</feature>
<feature type="binding site" evidence="1">
    <location>
        <position position="424"/>
    </location>
    <ligand>
        <name>a divalent metal cation</name>
        <dbReference type="ChEBI" id="CHEBI:60240"/>
        <label>2</label>
        <note>catalytic</note>
    </ligand>
</feature>
<protein>
    <recommendedName>
        <fullName evidence="1">Methionine aminopeptidase 2-1</fullName>
        <shortName evidence="1">MAP 2-1</shortName>
        <shortName evidence="1">MetAP 2-1</shortName>
        <ecNumber evidence="1">3.4.11.18</ecNumber>
    </recommendedName>
    <alternativeName>
        <fullName evidence="1">Peptidase M</fullName>
    </alternativeName>
</protein>
<sequence>MAAQADDELNKLRLNGQNGEAKEQVSASAVDTADNDDSEDDEKEEEGGAEVAATEAAKKKKKRKPKKKKKGGAKKQSSPPRVPVSELFPNNQYPEGEIVEYKDENNYRTTNEEKRYLDRMNNDFLQEYRQGAEVHRQVRQYAQKNIKPGQTLTEIAEGIEDAVRALTGHQGLEEGDNIKGGMGFPCGLSINHCAAHYTPNAGNKMVLQQGDVMKVDFGAHINGRIVDSAFTMTFDPVYDNLLTAVKEATNTGIREAGIDVRMSDIGAAIQEVMESYEVEINGTTYPVKAIRNLNGHNIDQHVIHGGKSVPIVKGGDQTKMEEGEVFAIETFGSTGKGYVREDMETSHYAKAQDAPNVSLRLSSAKNLLNVINKNFGTLPFCRRYLDRLGQDKYLLGLNNLVSAGIVQDYPPLCDIKGSYTAQYEHTIVLRPTVKEVISRGDDY</sequence>
<keyword id="KW-0031">Aminopeptidase</keyword>
<keyword id="KW-0963">Cytoplasm</keyword>
<keyword id="KW-0378">Hydrolase</keyword>
<keyword id="KW-0479">Metal-binding</keyword>
<keyword id="KW-0645">Protease</keyword>
<keyword id="KW-1185">Reference proteome</keyword>